<sequence>MISESQGGLMSAFTTPPKFSGFIRRLVEEGYVNAQNMQQALEKAKKFKQDIVPYLIDNFSISPLTIAEIISLEFGEPLLDLGVFDPALFLKDKIDEKLIQKYRIMPLVHRGHVLYVATSNPTNIEAMDAIRFNSKLKVEPIIVEHDKLERLLSEHFVEETHFNFDTEELDLDVEVDPHTTDDDDEDDKLKDEAPIVKYINKLLIDAIRMSASDLHFEPYEKSYRVRYRVDGVLRLIATPPLQLATRLASRLKVMSQMDISEKRVPQDGRIKLKMSKSKTIDFRVNSLPTLFGEKIVLRILDPASAMLGIDALGYEPEQKALFMEALNKPQGMLLITGPTGSGKTVSLYTGLNILNTEHANISTAEDPVEINLEGVNQVNVNPKVGLTFAAALRSFLRQDPDIIMVGEIRDLETAEIAIKAAQTGHLVMSTLHTNNAAETLTRLRNMGVASFNIATSVNLVIAQRLARRLCSQCKRPIQVPERSLLEMGFTPEDLAQPEFQIFEPVGCHDCREGYKGRVGIYEVMKITPEISKIIMEDGNALEIAATAETLGFNNLRRSGLKKVMQGVTSLQEINRVTSE</sequence>
<protein>
    <recommendedName>
        <fullName evidence="5">Type IV pilus assembly ATPase PilB</fullName>
    </recommendedName>
</protein>
<dbReference type="EMBL" id="CR543861">
    <property type="protein sequence ID" value="CAG67312.1"/>
    <property type="molecule type" value="Genomic_DNA"/>
</dbReference>
<dbReference type="SMR" id="Q6FF45"/>
<dbReference type="STRING" id="202950.GCA_001485005_00624"/>
<dbReference type="KEGG" id="aci:ACIAD0362"/>
<dbReference type="eggNOG" id="COG2804">
    <property type="taxonomic scope" value="Bacteria"/>
</dbReference>
<dbReference type="HOGENOM" id="CLU_013446_10_1_6"/>
<dbReference type="Proteomes" id="UP000000430">
    <property type="component" value="Chromosome"/>
</dbReference>
<dbReference type="GO" id="GO:0005737">
    <property type="term" value="C:cytoplasm"/>
    <property type="evidence" value="ECO:0007669"/>
    <property type="project" value="UniProtKB-SubCell"/>
</dbReference>
<dbReference type="GO" id="GO:0005886">
    <property type="term" value="C:plasma membrane"/>
    <property type="evidence" value="ECO:0007669"/>
    <property type="project" value="TreeGrafter"/>
</dbReference>
<dbReference type="GO" id="GO:0005524">
    <property type="term" value="F:ATP binding"/>
    <property type="evidence" value="ECO:0007669"/>
    <property type="project" value="UniProtKB-KW"/>
</dbReference>
<dbReference type="GO" id="GO:0016887">
    <property type="term" value="F:ATP hydrolysis activity"/>
    <property type="evidence" value="ECO:0007669"/>
    <property type="project" value="InterPro"/>
</dbReference>
<dbReference type="GO" id="GO:0046872">
    <property type="term" value="F:metal ion binding"/>
    <property type="evidence" value="ECO:0007669"/>
    <property type="project" value="UniProtKB-KW"/>
</dbReference>
<dbReference type="GO" id="GO:0009297">
    <property type="term" value="P:pilus assembly"/>
    <property type="evidence" value="ECO:0007669"/>
    <property type="project" value="InterPro"/>
</dbReference>
<dbReference type="CDD" id="cd01129">
    <property type="entry name" value="PulE-GspE-like"/>
    <property type="match status" value="1"/>
</dbReference>
<dbReference type="FunFam" id="3.30.450.90:FF:000001">
    <property type="entry name" value="Type II secretion system ATPase GspE"/>
    <property type="match status" value="1"/>
</dbReference>
<dbReference type="FunFam" id="3.40.50.300:FF:000398">
    <property type="entry name" value="Type IV pilus assembly ATPase PilB"/>
    <property type="match status" value="1"/>
</dbReference>
<dbReference type="Gene3D" id="3.30.450.90">
    <property type="match status" value="1"/>
</dbReference>
<dbReference type="Gene3D" id="3.40.50.300">
    <property type="entry name" value="P-loop containing nucleotide triphosphate hydrolases"/>
    <property type="match status" value="1"/>
</dbReference>
<dbReference type="Gene3D" id="3.30.300.160">
    <property type="entry name" value="Type II secretion system, protein E, N-terminal domain"/>
    <property type="match status" value="1"/>
</dbReference>
<dbReference type="InterPro" id="IPR013374">
    <property type="entry name" value="ATPase_typ4_pilus-assembl_PilB"/>
</dbReference>
<dbReference type="InterPro" id="IPR027417">
    <property type="entry name" value="P-loop_NTPase"/>
</dbReference>
<dbReference type="InterPro" id="IPR001482">
    <property type="entry name" value="T2SS/T4SS_dom"/>
</dbReference>
<dbReference type="InterPro" id="IPR037257">
    <property type="entry name" value="T2SS_E_N_sf"/>
</dbReference>
<dbReference type="InterPro" id="IPR007831">
    <property type="entry name" value="T2SS_GspE_N"/>
</dbReference>
<dbReference type="NCBIfam" id="TIGR02538">
    <property type="entry name" value="type_IV_pilB"/>
    <property type="match status" value="1"/>
</dbReference>
<dbReference type="PANTHER" id="PTHR30258:SF1">
    <property type="entry name" value="PROTEIN TRANSPORT PROTEIN HOFB HOMOLOG"/>
    <property type="match status" value="1"/>
</dbReference>
<dbReference type="PANTHER" id="PTHR30258">
    <property type="entry name" value="TYPE II SECRETION SYSTEM PROTEIN GSPE-RELATED"/>
    <property type="match status" value="1"/>
</dbReference>
<dbReference type="Pfam" id="PF05157">
    <property type="entry name" value="MshEN"/>
    <property type="match status" value="1"/>
</dbReference>
<dbReference type="Pfam" id="PF00437">
    <property type="entry name" value="T2SSE"/>
    <property type="match status" value="1"/>
</dbReference>
<dbReference type="SUPFAM" id="SSF160246">
    <property type="entry name" value="EspE N-terminal domain-like"/>
    <property type="match status" value="1"/>
</dbReference>
<dbReference type="SUPFAM" id="SSF52540">
    <property type="entry name" value="P-loop containing nucleoside triphosphate hydrolases"/>
    <property type="match status" value="1"/>
</dbReference>
<dbReference type="PROSITE" id="PS00662">
    <property type="entry name" value="T2SP_E"/>
    <property type="match status" value="1"/>
</dbReference>
<keyword id="KW-0067">ATP-binding</keyword>
<keyword id="KW-0963">Cytoplasm</keyword>
<keyword id="KW-1029">Fimbrium biogenesis</keyword>
<keyword id="KW-0479">Metal-binding</keyword>
<keyword id="KW-0547">Nucleotide-binding</keyword>
<keyword id="KW-0862">Zinc</keyword>
<organism>
    <name type="scientific">Acinetobacter baylyi (strain ATCC 33305 / BD413 / ADP1)</name>
    <dbReference type="NCBI Taxonomy" id="62977"/>
    <lineage>
        <taxon>Bacteria</taxon>
        <taxon>Pseudomonadati</taxon>
        <taxon>Pseudomonadota</taxon>
        <taxon>Gammaproteobacteria</taxon>
        <taxon>Moraxellales</taxon>
        <taxon>Moraxellaceae</taxon>
        <taxon>Acinetobacter</taxon>
    </lineage>
</organism>
<feature type="chain" id="PRO_0000453801" description="Type IV pilus assembly ATPase PilB">
    <location>
        <begin position="1"/>
        <end position="579"/>
    </location>
</feature>
<feature type="binding site" evidence="2">
    <location>
        <begin position="340"/>
        <end position="345"/>
    </location>
    <ligand>
        <name>ATP</name>
        <dbReference type="ChEBI" id="CHEBI:30616"/>
    </ligand>
</feature>
<feature type="binding site" evidence="2">
    <location>
        <position position="470"/>
    </location>
    <ligand>
        <name>Zn(2+)</name>
        <dbReference type="ChEBI" id="CHEBI:29105"/>
    </ligand>
</feature>
<feature type="binding site" evidence="2">
    <location>
        <position position="473"/>
    </location>
    <ligand>
        <name>Zn(2+)</name>
        <dbReference type="ChEBI" id="CHEBI:29105"/>
    </ligand>
</feature>
<feature type="binding site" evidence="2">
    <location>
        <position position="507"/>
    </location>
    <ligand>
        <name>Zn(2+)</name>
        <dbReference type="ChEBI" id="CHEBI:29105"/>
    </ligand>
</feature>
<feature type="binding site" evidence="2">
    <location>
        <position position="510"/>
    </location>
    <ligand>
        <name>Zn(2+)</name>
        <dbReference type="ChEBI" id="CHEBI:29105"/>
    </ligand>
</feature>
<accession>Q6FF45</accession>
<name>PILB_ACIAD</name>
<comment type="function">
    <text evidence="1 3">ATPase component of the type IV pilus (T4P) (By similarity). Acts as a molecular motor to provide the energy that is required for biogenesis of the pilus and the extrusion of substrates generated in the cytoplasm (By similarity). PilB is required for optimal T4P extension and, consequently, efficient natural transformation. May promote processive T4P extension (PubMed:34145281).</text>
</comment>
<comment type="activity regulation">
    <text evidence="3">Inhibited by the inhibitory protein CpiA.</text>
</comment>
<comment type="subunit">
    <text evidence="3">Interacts with CpiA.</text>
</comment>
<comment type="subcellular location">
    <subcellularLocation>
        <location evidence="1">Cytoplasm</location>
    </subcellularLocation>
</comment>
<comment type="disruption phenotype">
    <text evidence="3">Disruption of the gene reduces transformation rates by two orders of magnitude. Natural transformation is undetectable in the pilB-tfpB double mutant. The pilB-tfpB-pilT triple mutant produces no detectable T4P fibers.</text>
</comment>
<comment type="miscellaneous">
    <text evidence="3">Both PilB and TfpB are essential for optimal T4P production, with each motor playing a distinct role in T4P extension. Overexpression of pilB does not restore the transformation defect of a tfpB mutant.</text>
</comment>
<comment type="similarity">
    <text evidence="5">Belongs to the GSP E family.</text>
</comment>
<evidence type="ECO:0000250" key="1">
    <source>
        <dbReference type="UniProtKB" id="P22608"/>
    </source>
</evidence>
<evidence type="ECO:0000250" key="2">
    <source>
        <dbReference type="UniProtKB" id="Q5SLC9"/>
    </source>
</evidence>
<evidence type="ECO:0000269" key="3">
    <source>
    </source>
</evidence>
<evidence type="ECO:0000303" key="4">
    <source>
    </source>
</evidence>
<evidence type="ECO:0000305" key="5"/>
<evidence type="ECO:0000312" key="6">
    <source>
        <dbReference type="EMBL" id="CAG67312.1"/>
    </source>
</evidence>
<proteinExistence type="evidence at protein level"/>
<reference key="1">
    <citation type="journal article" date="2004" name="Nucleic Acids Res.">
        <title>Unique features revealed by the genome sequence of Acinetobacter sp. ADP1, a versatile and naturally transformation competent bacterium.</title>
        <authorList>
            <person name="Barbe V."/>
            <person name="Vallenet D."/>
            <person name="Fonknechten N."/>
            <person name="Kreimeyer A."/>
            <person name="Oztas S."/>
            <person name="Labarre L."/>
            <person name="Cruveiller S."/>
            <person name="Robert C."/>
            <person name="Duprat S."/>
            <person name="Wincker P."/>
            <person name="Ornston L.N."/>
            <person name="Weissenbach J."/>
            <person name="Marliere P."/>
            <person name="Cohen G.N."/>
            <person name="Medigue C."/>
        </authorList>
    </citation>
    <scope>NUCLEOTIDE SEQUENCE [LARGE SCALE GENOMIC DNA]</scope>
    <source>
        <strain>ATCC 33305 / BD413 / ADP1</strain>
    </source>
</reference>
<reference key="2">
    <citation type="journal article" date="2021" name="Nat. Commun.">
        <title>Acinetobacter baylyi regulates type IV pilus synthesis by employing two extension motors and a motor protein inhibitor.</title>
        <authorList>
            <person name="Ellison C.K."/>
            <person name="Dalia T.N."/>
            <person name="Klancher C.A."/>
            <person name="Shaevitz J.W."/>
            <person name="Gitai Z."/>
            <person name="Dalia A.B."/>
        </authorList>
    </citation>
    <scope>FUNCTION</scope>
    <scope>OVEREXPRESSION</scope>
    <scope>ACTIVITY REGULATION</scope>
    <scope>INTERACTION WITH CPIA</scope>
    <scope>DISRUPTION PHENOTYPE</scope>
    <source>
        <strain>ATCC 33305 / BD413 / ADP1</strain>
    </source>
</reference>
<gene>
    <name evidence="4" type="primary">pilB</name>
    <name evidence="6" type="ordered locus">ACIAD0362</name>
</gene>